<keyword id="KW-0030">Aminoacyl-tRNA synthetase</keyword>
<keyword id="KW-0067">ATP-binding</keyword>
<keyword id="KW-0963">Cytoplasm</keyword>
<keyword id="KW-0436">Ligase</keyword>
<keyword id="KW-0547">Nucleotide-binding</keyword>
<keyword id="KW-0648">Protein biosynthesis</keyword>
<feature type="chain" id="PRO_0000119586" description="Glutamate--tRNA ligase">
    <location>
        <begin position="1"/>
        <end position="470"/>
    </location>
</feature>
<feature type="short sequence motif" description="'HIGH' region" evidence="1">
    <location>
        <begin position="9"/>
        <end position="19"/>
    </location>
</feature>
<feature type="short sequence motif" description="'KMSKS' region" evidence="1">
    <location>
        <begin position="236"/>
        <end position="240"/>
    </location>
</feature>
<feature type="binding site" evidence="1">
    <location>
        <position position="239"/>
    </location>
    <ligand>
        <name>ATP</name>
        <dbReference type="ChEBI" id="CHEBI:30616"/>
    </ligand>
</feature>
<name>SYE_LEGPA</name>
<comment type="function">
    <text evidence="1">Catalyzes the attachment of glutamate to tRNA(Glu) in a two-step reaction: glutamate is first activated by ATP to form Glu-AMP and then transferred to the acceptor end of tRNA(Glu).</text>
</comment>
<comment type="catalytic activity">
    <reaction evidence="1">
        <text>tRNA(Glu) + L-glutamate + ATP = L-glutamyl-tRNA(Glu) + AMP + diphosphate</text>
        <dbReference type="Rhea" id="RHEA:23540"/>
        <dbReference type="Rhea" id="RHEA-COMP:9663"/>
        <dbReference type="Rhea" id="RHEA-COMP:9680"/>
        <dbReference type="ChEBI" id="CHEBI:29985"/>
        <dbReference type="ChEBI" id="CHEBI:30616"/>
        <dbReference type="ChEBI" id="CHEBI:33019"/>
        <dbReference type="ChEBI" id="CHEBI:78442"/>
        <dbReference type="ChEBI" id="CHEBI:78520"/>
        <dbReference type="ChEBI" id="CHEBI:456215"/>
        <dbReference type="EC" id="6.1.1.17"/>
    </reaction>
</comment>
<comment type="subunit">
    <text evidence="1">Monomer.</text>
</comment>
<comment type="subcellular location">
    <subcellularLocation>
        <location evidence="1">Cytoplasm</location>
    </subcellularLocation>
</comment>
<comment type="similarity">
    <text evidence="1">Belongs to the class-I aminoacyl-tRNA synthetase family. Glutamate--tRNA ligase type 1 subfamily.</text>
</comment>
<dbReference type="EC" id="6.1.1.17" evidence="1"/>
<dbReference type="EMBL" id="CR628336">
    <property type="protein sequence ID" value="CAH13038.1"/>
    <property type="molecule type" value="Genomic_DNA"/>
</dbReference>
<dbReference type="RefSeq" id="WP_011214164.1">
    <property type="nucleotide sequence ID" value="NC_006368.1"/>
</dbReference>
<dbReference type="SMR" id="Q5X3Z5"/>
<dbReference type="KEGG" id="lpp:lpp1886"/>
<dbReference type="LegioList" id="lpp1886"/>
<dbReference type="HOGENOM" id="CLU_015768_6_0_6"/>
<dbReference type="GO" id="GO:0005829">
    <property type="term" value="C:cytosol"/>
    <property type="evidence" value="ECO:0007669"/>
    <property type="project" value="TreeGrafter"/>
</dbReference>
<dbReference type="GO" id="GO:0005524">
    <property type="term" value="F:ATP binding"/>
    <property type="evidence" value="ECO:0007669"/>
    <property type="project" value="UniProtKB-UniRule"/>
</dbReference>
<dbReference type="GO" id="GO:0004818">
    <property type="term" value="F:glutamate-tRNA ligase activity"/>
    <property type="evidence" value="ECO:0007669"/>
    <property type="project" value="UniProtKB-UniRule"/>
</dbReference>
<dbReference type="GO" id="GO:0000049">
    <property type="term" value="F:tRNA binding"/>
    <property type="evidence" value="ECO:0007669"/>
    <property type="project" value="InterPro"/>
</dbReference>
<dbReference type="GO" id="GO:0008270">
    <property type="term" value="F:zinc ion binding"/>
    <property type="evidence" value="ECO:0007669"/>
    <property type="project" value="InterPro"/>
</dbReference>
<dbReference type="GO" id="GO:0006424">
    <property type="term" value="P:glutamyl-tRNA aminoacylation"/>
    <property type="evidence" value="ECO:0007669"/>
    <property type="project" value="UniProtKB-UniRule"/>
</dbReference>
<dbReference type="CDD" id="cd00808">
    <property type="entry name" value="GluRS_core"/>
    <property type="match status" value="1"/>
</dbReference>
<dbReference type="FunFam" id="3.40.50.620:FF:000007">
    <property type="entry name" value="Glutamate--tRNA ligase"/>
    <property type="match status" value="1"/>
</dbReference>
<dbReference type="Gene3D" id="1.10.10.350">
    <property type="match status" value="1"/>
</dbReference>
<dbReference type="Gene3D" id="3.40.50.620">
    <property type="entry name" value="HUPs"/>
    <property type="match status" value="1"/>
</dbReference>
<dbReference type="HAMAP" id="MF_00022">
    <property type="entry name" value="Glu_tRNA_synth_type1"/>
    <property type="match status" value="1"/>
</dbReference>
<dbReference type="InterPro" id="IPR045462">
    <property type="entry name" value="aa-tRNA-synth_I_cd-bd"/>
</dbReference>
<dbReference type="InterPro" id="IPR020751">
    <property type="entry name" value="aa-tRNA-synth_I_codon-bd_sub2"/>
</dbReference>
<dbReference type="InterPro" id="IPR001412">
    <property type="entry name" value="aa-tRNA-synth_I_CS"/>
</dbReference>
<dbReference type="InterPro" id="IPR008925">
    <property type="entry name" value="aa_tRNA-synth_I_cd-bd_sf"/>
</dbReference>
<dbReference type="InterPro" id="IPR004527">
    <property type="entry name" value="Glu-tRNA-ligase_bac/mito"/>
</dbReference>
<dbReference type="InterPro" id="IPR000924">
    <property type="entry name" value="Glu/Gln-tRNA-synth"/>
</dbReference>
<dbReference type="InterPro" id="IPR020058">
    <property type="entry name" value="Glu/Gln-tRNA-synth_Ib_cat-dom"/>
</dbReference>
<dbReference type="InterPro" id="IPR049940">
    <property type="entry name" value="GluQ/Sye"/>
</dbReference>
<dbReference type="InterPro" id="IPR033910">
    <property type="entry name" value="GluRS_core"/>
</dbReference>
<dbReference type="InterPro" id="IPR014729">
    <property type="entry name" value="Rossmann-like_a/b/a_fold"/>
</dbReference>
<dbReference type="NCBIfam" id="TIGR00464">
    <property type="entry name" value="gltX_bact"/>
    <property type="match status" value="1"/>
</dbReference>
<dbReference type="PANTHER" id="PTHR43311">
    <property type="entry name" value="GLUTAMATE--TRNA LIGASE"/>
    <property type="match status" value="1"/>
</dbReference>
<dbReference type="PANTHER" id="PTHR43311:SF2">
    <property type="entry name" value="GLUTAMATE--TRNA LIGASE, MITOCHONDRIAL-RELATED"/>
    <property type="match status" value="1"/>
</dbReference>
<dbReference type="Pfam" id="PF19269">
    <property type="entry name" value="Anticodon_2"/>
    <property type="match status" value="1"/>
</dbReference>
<dbReference type="Pfam" id="PF00749">
    <property type="entry name" value="tRNA-synt_1c"/>
    <property type="match status" value="1"/>
</dbReference>
<dbReference type="PRINTS" id="PR00987">
    <property type="entry name" value="TRNASYNTHGLU"/>
</dbReference>
<dbReference type="SUPFAM" id="SSF48163">
    <property type="entry name" value="An anticodon-binding domain of class I aminoacyl-tRNA synthetases"/>
    <property type="match status" value="1"/>
</dbReference>
<dbReference type="SUPFAM" id="SSF52374">
    <property type="entry name" value="Nucleotidylyl transferase"/>
    <property type="match status" value="1"/>
</dbReference>
<dbReference type="PROSITE" id="PS00178">
    <property type="entry name" value="AA_TRNA_LIGASE_I"/>
    <property type="match status" value="1"/>
</dbReference>
<protein>
    <recommendedName>
        <fullName evidence="1">Glutamate--tRNA ligase</fullName>
        <ecNumber evidence="1">6.1.1.17</ecNumber>
    </recommendedName>
    <alternativeName>
        <fullName evidence="1">Glutamyl-tRNA synthetase</fullName>
        <shortName evidence="1">GluRS</shortName>
    </alternativeName>
</protein>
<proteinExistence type="inferred from homology"/>
<sequence>MTVRTRFAPSPTGFLHVGGVRTALFSWLYAKHHNGQFILRIEDTDRERSTQESVQAILDGMAWLGLNFDEGPYYQTERYARYQQVAQQLLKEGKAYRCQCSKERLEALREAQLAAKEKPRYDGHCRNQILPDSGVPYVIRFRNPDAGIVSFHDEVYGDIHVDNSELDDLILVRSDGHPTYNFAVVIDDWDMKITHVIRGDDHINNTPRQINLFKALDAPVPVFAHLPMILGEDGKRLSKRHGAVSVLQFKELGVLPHALLNYLVRLGWSHGDQEIFSVQEMINSFDLKNVSRGVSSFNYDKLYWLNQHYQKSDSQESVANALQWHFEQAGIDLNQGPDLKDLVAVQAERCKSLAEMCQISQYFYTDTIEYNEDAVKKHLRPVVLEPLMVLHERLKALDEWKNDKIQECINDVSLQFDLNLGKIAQPLRVAVTGSGTSPSIDMTLALLGKNKSIKRLEDALEKIRARASAV</sequence>
<gene>
    <name evidence="1" type="primary">gltX</name>
    <name type="ordered locus">lpp1886</name>
</gene>
<reference key="1">
    <citation type="journal article" date="2004" name="Nat. Genet.">
        <title>Evidence in the Legionella pneumophila genome for exploitation of host cell functions and high genome plasticity.</title>
        <authorList>
            <person name="Cazalet C."/>
            <person name="Rusniok C."/>
            <person name="Brueggemann H."/>
            <person name="Zidane N."/>
            <person name="Magnier A."/>
            <person name="Ma L."/>
            <person name="Tichit M."/>
            <person name="Jarraud S."/>
            <person name="Bouchier C."/>
            <person name="Vandenesch F."/>
            <person name="Kunst F."/>
            <person name="Etienne J."/>
            <person name="Glaser P."/>
            <person name="Buchrieser C."/>
        </authorList>
    </citation>
    <scope>NUCLEOTIDE SEQUENCE [LARGE SCALE GENOMIC DNA]</scope>
    <source>
        <strain>Paris</strain>
    </source>
</reference>
<organism>
    <name type="scientific">Legionella pneumophila (strain Paris)</name>
    <dbReference type="NCBI Taxonomy" id="297246"/>
    <lineage>
        <taxon>Bacteria</taxon>
        <taxon>Pseudomonadati</taxon>
        <taxon>Pseudomonadota</taxon>
        <taxon>Gammaproteobacteria</taxon>
        <taxon>Legionellales</taxon>
        <taxon>Legionellaceae</taxon>
        <taxon>Legionella</taxon>
    </lineage>
</organism>
<accession>Q5X3Z5</accession>
<evidence type="ECO:0000255" key="1">
    <source>
        <dbReference type="HAMAP-Rule" id="MF_00022"/>
    </source>
</evidence>